<accession>Q51567</accession>
<accession>Q9X5W2</accession>
<evidence type="ECO:0000255" key="1">
    <source>
        <dbReference type="HAMAP-Rule" id="MF_01988"/>
    </source>
</evidence>
<evidence type="ECO:0000269" key="2">
    <source>
    </source>
</evidence>
<evidence type="ECO:0000305" key="3"/>
<organism>
    <name type="scientific">Pseudomonas aeruginosa (strain ATCC 15692 / DSM 22644 / CIP 104116 / JCM 14847 / LMG 12228 / 1C / PRS 101 / PAO1)</name>
    <dbReference type="NCBI Taxonomy" id="208964"/>
    <lineage>
        <taxon>Bacteria</taxon>
        <taxon>Pseudomonadati</taxon>
        <taxon>Pseudomonadota</taxon>
        <taxon>Gammaproteobacteria</taxon>
        <taxon>Pseudomonadales</taxon>
        <taxon>Pseudomonadaceae</taxon>
        <taxon>Pseudomonas</taxon>
    </lineage>
</organism>
<gene>
    <name evidence="1" type="primary">sucD</name>
    <name type="ordered locus">PA1589</name>
</gene>
<reference key="1">
    <citation type="journal article" date="2000" name="J. Bacteriol.">
        <title>Succinyl coenzyme A synthetase of Pseudomonas aeruginosa with a broad specificity for nucleoside triphosphate (NTP) synthesis modulates specificity for NTP synthesis by the 12-kilodalton form of nucleoside diphosphate kinase.</title>
        <authorList>
            <person name="Kapatral V."/>
            <person name="Bina X."/>
            <person name="Chakrabarty A.M."/>
        </authorList>
    </citation>
    <scope>NUCLEOTIDE SEQUENCE [GENOMIC DNA]</scope>
    <scope>FUNCTION</scope>
    <scope>CATALYTIC ACTIVITY</scope>
    <source>
        <strain>ATCC 15692 / DSM 22644 / CIP 104116 / JCM 14847 / LMG 12228 / 1C / PRS 101 / PAO1</strain>
    </source>
</reference>
<reference key="2">
    <citation type="journal article" date="2000" name="Nature">
        <title>Complete genome sequence of Pseudomonas aeruginosa PAO1, an opportunistic pathogen.</title>
        <authorList>
            <person name="Stover C.K."/>
            <person name="Pham X.-Q.T."/>
            <person name="Erwin A.L."/>
            <person name="Mizoguchi S.D."/>
            <person name="Warrener P."/>
            <person name="Hickey M.J."/>
            <person name="Brinkman F.S.L."/>
            <person name="Hufnagle W.O."/>
            <person name="Kowalik D.J."/>
            <person name="Lagrou M."/>
            <person name="Garber R.L."/>
            <person name="Goltry L."/>
            <person name="Tolentino E."/>
            <person name="Westbrock-Wadman S."/>
            <person name="Yuan Y."/>
            <person name="Brody L.L."/>
            <person name="Coulter S.N."/>
            <person name="Folger K.R."/>
            <person name="Kas A."/>
            <person name="Larbig K."/>
            <person name="Lim R.M."/>
            <person name="Smith K.A."/>
            <person name="Spencer D.H."/>
            <person name="Wong G.K.-S."/>
            <person name="Wu Z."/>
            <person name="Paulsen I.T."/>
            <person name="Reizer J."/>
            <person name="Saier M.H. Jr."/>
            <person name="Hancock R.E.W."/>
            <person name="Lory S."/>
            <person name="Olson M.V."/>
        </authorList>
    </citation>
    <scope>NUCLEOTIDE SEQUENCE [LARGE SCALE GENOMIC DNA]</scope>
    <source>
        <strain>ATCC 15692 / DSM 22644 / CIP 104116 / JCM 14847 / LMG 12228 / 1C / PRS 101 / PAO1</strain>
    </source>
</reference>
<reference key="3">
    <citation type="journal article" date="1996" name="Microbiology">
        <title>Physical mapping of 32 genetic markers on the Pseudomonas aeruginosa PAO1 chromosome.</title>
        <authorList>
            <person name="Liao X."/>
            <person name="Charlebois I."/>
            <person name="Ouellet C."/>
            <person name="Morency M.J."/>
            <person name="Dewar K."/>
            <person name="Lightfoot J."/>
            <person name="Foster J."/>
            <person name="Siehnel R."/>
            <person name="Schweizer H."/>
            <person name="Lam J.S."/>
            <person name="Hancock R.E."/>
            <person name="Levesque R.C."/>
        </authorList>
    </citation>
    <scope>NUCLEOTIDE SEQUENCE [GENOMIC DNA] OF 1-20</scope>
    <source>
        <strain>ATCC 15692 / DSM 22644 / CIP 104116 / JCM 14847 / LMG 12228 / 1C / PRS 101 / PAO1</strain>
    </source>
</reference>
<comment type="function">
    <text evidence="1 2">Succinyl-CoA synthetase functions in the citric acid cycle (TCA), coupling the hydrolysis of succinyl-CoA to the synthesis of either ATP or GTP and thus represents the only step of substrate-level phosphorylation in the TCA. The alpha subunit of the enzyme binds the substrates coenzyme A and phosphate, while succinate binding and nucleotide specificity is provided by the beta subunit. Can also generate UTP or CTP, although it preferentially synthesizes ATP and/or GTP.</text>
</comment>
<comment type="catalytic activity">
    <reaction evidence="1 2">
        <text>succinate + ATP + CoA = succinyl-CoA + ADP + phosphate</text>
        <dbReference type="Rhea" id="RHEA:17661"/>
        <dbReference type="ChEBI" id="CHEBI:30031"/>
        <dbReference type="ChEBI" id="CHEBI:30616"/>
        <dbReference type="ChEBI" id="CHEBI:43474"/>
        <dbReference type="ChEBI" id="CHEBI:57287"/>
        <dbReference type="ChEBI" id="CHEBI:57292"/>
        <dbReference type="ChEBI" id="CHEBI:456216"/>
        <dbReference type="EC" id="6.2.1.5"/>
    </reaction>
    <physiologicalReaction direction="right-to-left" evidence="1 2">
        <dbReference type="Rhea" id="RHEA:17663"/>
    </physiologicalReaction>
</comment>
<comment type="catalytic activity">
    <reaction evidence="1 2">
        <text>GTP + succinate + CoA = succinyl-CoA + GDP + phosphate</text>
        <dbReference type="Rhea" id="RHEA:22120"/>
        <dbReference type="ChEBI" id="CHEBI:30031"/>
        <dbReference type="ChEBI" id="CHEBI:37565"/>
        <dbReference type="ChEBI" id="CHEBI:43474"/>
        <dbReference type="ChEBI" id="CHEBI:57287"/>
        <dbReference type="ChEBI" id="CHEBI:57292"/>
        <dbReference type="ChEBI" id="CHEBI:58189"/>
    </reaction>
    <physiologicalReaction direction="right-to-left" evidence="1 2">
        <dbReference type="Rhea" id="RHEA:22122"/>
    </physiologicalReaction>
</comment>
<comment type="pathway">
    <text evidence="1">Carbohydrate metabolism; tricarboxylic acid cycle; succinate from succinyl-CoA (ligase route): step 1/1.</text>
</comment>
<comment type="subunit">
    <text evidence="1">Heterotetramer of two alpha and two beta subunits.</text>
</comment>
<comment type="similarity">
    <text evidence="1">Belongs to the succinate/malate CoA ligase alpha subunit family.</text>
</comment>
<feature type="chain" id="PRO_0000102797" description="Succinate--CoA ligase [ADP-forming] subunit alpha">
    <location>
        <begin position="1"/>
        <end position="295"/>
    </location>
</feature>
<feature type="active site" description="Tele-phosphohistidine intermediate" evidence="1">
    <location>
        <position position="247"/>
    </location>
</feature>
<feature type="binding site" evidence="1">
    <location>
        <begin position="17"/>
        <end position="20"/>
    </location>
    <ligand>
        <name>CoA</name>
        <dbReference type="ChEBI" id="CHEBI:57287"/>
    </ligand>
</feature>
<feature type="binding site" evidence="1">
    <location>
        <position position="43"/>
    </location>
    <ligand>
        <name>CoA</name>
        <dbReference type="ChEBI" id="CHEBI:57287"/>
    </ligand>
</feature>
<feature type="binding site" evidence="1">
    <location>
        <begin position="96"/>
        <end position="98"/>
    </location>
    <ligand>
        <name>CoA</name>
        <dbReference type="ChEBI" id="CHEBI:57287"/>
    </ligand>
</feature>
<feature type="binding site" evidence="1">
    <location>
        <position position="159"/>
    </location>
    <ligand>
        <name>substrate</name>
        <note>ligand shared with subunit beta</note>
    </ligand>
</feature>
<feature type="sequence conflict" description="In Ref. 3; CAA58871." evidence="3" ref="3">
    <original>GSQ</original>
    <variation>VEP</variation>
    <location>
        <begin position="18"/>
        <end position="20"/>
    </location>
</feature>
<feature type="sequence conflict" description="In Ref. 1; AAD21623." evidence="3" ref="1">
    <original>L</original>
    <variation>R</variation>
    <location>
        <position position="194"/>
    </location>
</feature>
<proteinExistence type="evidence at protein level"/>
<keyword id="KW-0436">Ligase</keyword>
<keyword id="KW-0547">Nucleotide-binding</keyword>
<keyword id="KW-1185">Reference proteome</keyword>
<keyword id="KW-0816">Tricarboxylic acid cycle</keyword>
<name>SUCD_PSEAE</name>
<dbReference type="EC" id="6.2.1.5" evidence="1 2"/>
<dbReference type="EMBL" id="AF128399">
    <property type="protein sequence ID" value="AAD21623.1"/>
    <property type="molecule type" value="Genomic_DNA"/>
</dbReference>
<dbReference type="EMBL" id="AE004091">
    <property type="protein sequence ID" value="AAG04978.1"/>
    <property type="molecule type" value="Genomic_DNA"/>
</dbReference>
<dbReference type="EMBL" id="X84052">
    <property type="protein sequence ID" value="CAA58871.1"/>
    <property type="molecule type" value="Genomic_DNA"/>
</dbReference>
<dbReference type="PIR" id="B83446">
    <property type="entry name" value="B83446"/>
</dbReference>
<dbReference type="RefSeq" id="NP_250280.1">
    <property type="nucleotide sequence ID" value="NC_002516.2"/>
</dbReference>
<dbReference type="RefSeq" id="WP_003087428.1">
    <property type="nucleotide sequence ID" value="NZ_QZGE01000003.1"/>
</dbReference>
<dbReference type="SMR" id="Q51567"/>
<dbReference type="FunCoup" id="Q51567">
    <property type="interactions" value="705"/>
</dbReference>
<dbReference type="STRING" id="208964.PA1589"/>
<dbReference type="PaxDb" id="208964-PA1589"/>
<dbReference type="DNASU" id="882039"/>
<dbReference type="GeneID" id="84597398"/>
<dbReference type="GeneID" id="882039"/>
<dbReference type="KEGG" id="pae:PA1589"/>
<dbReference type="PATRIC" id="fig|208964.12.peg.1648"/>
<dbReference type="PseudoCAP" id="PA1589"/>
<dbReference type="HOGENOM" id="CLU_052104_0_0_6"/>
<dbReference type="InParanoid" id="Q51567"/>
<dbReference type="OrthoDB" id="9807196at2"/>
<dbReference type="PhylomeDB" id="Q51567"/>
<dbReference type="BioCyc" id="PAER208964:G1FZ6-1619-MONOMER"/>
<dbReference type="UniPathway" id="UPA00223">
    <property type="reaction ID" value="UER00999"/>
</dbReference>
<dbReference type="Proteomes" id="UP000002438">
    <property type="component" value="Chromosome"/>
</dbReference>
<dbReference type="GO" id="GO:0042709">
    <property type="term" value="C:succinate-CoA ligase complex"/>
    <property type="evidence" value="ECO:0000314"/>
    <property type="project" value="PseudoCAP"/>
</dbReference>
<dbReference type="GO" id="GO:0009361">
    <property type="term" value="C:succinate-CoA ligase complex (ADP-forming)"/>
    <property type="evidence" value="ECO:0000318"/>
    <property type="project" value="GO_Central"/>
</dbReference>
<dbReference type="GO" id="GO:0004550">
    <property type="term" value="F:nucleoside diphosphate kinase activity"/>
    <property type="evidence" value="ECO:0000314"/>
    <property type="project" value="PseudoCAP"/>
</dbReference>
<dbReference type="GO" id="GO:0000166">
    <property type="term" value="F:nucleotide binding"/>
    <property type="evidence" value="ECO:0007669"/>
    <property type="project" value="UniProtKB-KW"/>
</dbReference>
<dbReference type="GO" id="GO:0004775">
    <property type="term" value="F:succinate-CoA ligase (ADP-forming) activity"/>
    <property type="evidence" value="ECO:0000314"/>
    <property type="project" value="PseudoCAP"/>
</dbReference>
<dbReference type="GO" id="GO:0004776">
    <property type="term" value="F:succinate-CoA ligase (GDP-forming) activity"/>
    <property type="evidence" value="ECO:0000318"/>
    <property type="project" value="GO_Central"/>
</dbReference>
<dbReference type="GO" id="GO:0009142">
    <property type="term" value="P:nucleoside triphosphate biosynthetic process"/>
    <property type="evidence" value="ECO:0000314"/>
    <property type="project" value="PseudoCAP"/>
</dbReference>
<dbReference type="GO" id="GO:0006099">
    <property type="term" value="P:tricarboxylic acid cycle"/>
    <property type="evidence" value="ECO:0000318"/>
    <property type="project" value="GO_Central"/>
</dbReference>
<dbReference type="FunFam" id="3.40.50.261:FF:000002">
    <property type="entry name" value="Succinate--CoA ligase [ADP-forming] subunit alpha"/>
    <property type="match status" value="1"/>
</dbReference>
<dbReference type="FunFam" id="3.40.50.720:FF:000002">
    <property type="entry name" value="Succinate--CoA ligase [ADP-forming] subunit alpha"/>
    <property type="match status" value="1"/>
</dbReference>
<dbReference type="Gene3D" id="3.40.50.720">
    <property type="entry name" value="NAD(P)-binding Rossmann-like Domain"/>
    <property type="match status" value="1"/>
</dbReference>
<dbReference type="Gene3D" id="3.40.50.261">
    <property type="entry name" value="Succinyl-CoA synthetase domains"/>
    <property type="match status" value="1"/>
</dbReference>
<dbReference type="HAMAP" id="MF_01988">
    <property type="entry name" value="Succ_CoA_alpha"/>
    <property type="match status" value="1"/>
</dbReference>
<dbReference type="InterPro" id="IPR017440">
    <property type="entry name" value="Cit_synth/succinyl-CoA_lig_AS"/>
</dbReference>
<dbReference type="InterPro" id="IPR033847">
    <property type="entry name" value="Citrt_syn/SCS-alpha_CS"/>
</dbReference>
<dbReference type="InterPro" id="IPR003781">
    <property type="entry name" value="CoA-bd"/>
</dbReference>
<dbReference type="InterPro" id="IPR005810">
    <property type="entry name" value="CoA_lig_alpha"/>
</dbReference>
<dbReference type="InterPro" id="IPR036291">
    <property type="entry name" value="NAD(P)-bd_dom_sf"/>
</dbReference>
<dbReference type="InterPro" id="IPR005811">
    <property type="entry name" value="SUCC_ACL_C"/>
</dbReference>
<dbReference type="InterPro" id="IPR016102">
    <property type="entry name" value="Succinyl-CoA_synth-like"/>
</dbReference>
<dbReference type="NCBIfam" id="NF004230">
    <property type="entry name" value="PRK05678.1"/>
    <property type="match status" value="1"/>
</dbReference>
<dbReference type="NCBIfam" id="TIGR01019">
    <property type="entry name" value="sucCoAalpha"/>
    <property type="match status" value="1"/>
</dbReference>
<dbReference type="PANTHER" id="PTHR11117:SF2">
    <property type="entry name" value="SUCCINATE--COA LIGASE [ADP_GDP-FORMING] SUBUNIT ALPHA, MITOCHONDRIAL"/>
    <property type="match status" value="1"/>
</dbReference>
<dbReference type="PANTHER" id="PTHR11117">
    <property type="entry name" value="SUCCINYL-COA LIGASE SUBUNIT ALPHA"/>
    <property type="match status" value="1"/>
</dbReference>
<dbReference type="Pfam" id="PF02629">
    <property type="entry name" value="CoA_binding"/>
    <property type="match status" value="1"/>
</dbReference>
<dbReference type="Pfam" id="PF00549">
    <property type="entry name" value="Ligase_CoA"/>
    <property type="match status" value="1"/>
</dbReference>
<dbReference type="PIRSF" id="PIRSF001553">
    <property type="entry name" value="SucCS_alpha"/>
    <property type="match status" value="1"/>
</dbReference>
<dbReference type="PRINTS" id="PR01798">
    <property type="entry name" value="SCOASYNTHASE"/>
</dbReference>
<dbReference type="SMART" id="SM00881">
    <property type="entry name" value="CoA_binding"/>
    <property type="match status" value="1"/>
</dbReference>
<dbReference type="SUPFAM" id="SSF51735">
    <property type="entry name" value="NAD(P)-binding Rossmann-fold domains"/>
    <property type="match status" value="1"/>
</dbReference>
<dbReference type="SUPFAM" id="SSF52210">
    <property type="entry name" value="Succinyl-CoA synthetase domains"/>
    <property type="match status" value="1"/>
</dbReference>
<dbReference type="PROSITE" id="PS01216">
    <property type="entry name" value="SUCCINYL_COA_LIG_1"/>
    <property type="match status" value="1"/>
</dbReference>
<dbReference type="PROSITE" id="PS00399">
    <property type="entry name" value="SUCCINYL_COA_LIG_2"/>
    <property type="match status" value="1"/>
</dbReference>
<protein>
    <recommendedName>
        <fullName evidence="1">Succinate--CoA ligase [ADP-forming] subunit alpha</fullName>
        <ecNumber evidence="1 2">6.2.1.5</ecNumber>
    </recommendedName>
    <alternativeName>
        <fullName evidence="1">Succinyl-CoA synthetase subunit alpha</fullName>
        <shortName evidence="1">SCS-alpha</shortName>
    </alternativeName>
</protein>
<sequence>MSVLINKDTKVICQGFTGSQGTFHSEQAIAYGTKMVGGVTPGKGGTTHLGLPVFNTVKEAVEATGAEASVIYVPAPFCKDSILEAAFGGIKLIVCITEGIPTLDMLDAKVKCDELGVRLIGPNCPGVITPGECKIGIMPGHIHLPGKVGIVSRSGTLTYEAVKQTTDAGFGQSTCVGIGGDPIPGSNFIDILKLFQEDPQTEAIVMIGEIGGSAEEEAAAFIKANVTKPVVSYIAGVTAPPGKRMGHAGAIISGGKGTADEKFAALQDAGVKTVRSLADIGKALAELTGWEVKKA</sequence>